<name>ORN_BURO1</name>
<dbReference type="EC" id="3.1.15.-" evidence="1"/>
<dbReference type="EMBL" id="CP000378">
    <property type="protein sequence ID" value="ABF75510.1"/>
    <property type="molecule type" value="Genomic_DNA"/>
</dbReference>
<dbReference type="SMR" id="Q1BXZ5"/>
<dbReference type="HOGENOM" id="CLU_064761_2_0_4"/>
<dbReference type="GO" id="GO:0005737">
    <property type="term" value="C:cytoplasm"/>
    <property type="evidence" value="ECO:0007669"/>
    <property type="project" value="UniProtKB-SubCell"/>
</dbReference>
<dbReference type="GO" id="GO:0000175">
    <property type="term" value="F:3'-5'-RNA exonuclease activity"/>
    <property type="evidence" value="ECO:0007669"/>
    <property type="project" value="InterPro"/>
</dbReference>
<dbReference type="GO" id="GO:0003676">
    <property type="term" value="F:nucleic acid binding"/>
    <property type="evidence" value="ECO:0007669"/>
    <property type="project" value="InterPro"/>
</dbReference>
<dbReference type="GO" id="GO:0006259">
    <property type="term" value="P:DNA metabolic process"/>
    <property type="evidence" value="ECO:0007669"/>
    <property type="project" value="UniProtKB-ARBA"/>
</dbReference>
<dbReference type="CDD" id="cd06135">
    <property type="entry name" value="Orn"/>
    <property type="match status" value="1"/>
</dbReference>
<dbReference type="FunFam" id="3.30.420.10:FF:000003">
    <property type="entry name" value="Oligoribonuclease"/>
    <property type="match status" value="1"/>
</dbReference>
<dbReference type="Gene3D" id="3.30.420.10">
    <property type="entry name" value="Ribonuclease H-like superfamily/Ribonuclease H"/>
    <property type="match status" value="1"/>
</dbReference>
<dbReference type="HAMAP" id="MF_00045">
    <property type="entry name" value="Oligoribonuclease"/>
    <property type="match status" value="1"/>
</dbReference>
<dbReference type="InterPro" id="IPR013520">
    <property type="entry name" value="Exonuclease_RNaseT/DNA_pol3"/>
</dbReference>
<dbReference type="InterPro" id="IPR022894">
    <property type="entry name" value="Oligoribonuclease"/>
</dbReference>
<dbReference type="InterPro" id="IPR012337">
    <property type="entry name" value="RNaseH-like_sf"/>
</dbReference>
<dbReference type="InterPro" id="IPR036397">
    <property type="entry name" value="RNaseH_sf"/>
</dbReference>
<dbReference type="NCBIfam" id="NF003765">
    <property type="entry name" value="PRK05359.1"/>
    <property type="match status" value="1"/>
</dbReference>
<dbReference type="PANTHER" id="PTHR11046">
    <property type="entry name" value="OLIGORIBONUCLEASE, MITOCHONDRIAL"/>
    <property type="match status" value="1"/>
</dbReference>
<dbReference type="PANTHER" id="PTHR11046:SF0">
    <property type="entry name" value="OLIGORIBONUCLEASE, MITOCHONDRIAL"/>
    <property type="match status" value="1"/>
</dbReference>
<dbReference type="Pfam" id="PF00929">
    <property type="entry name" value="RNase_T"/>
    <property type="match status" value="1"/>
</dbReference>
<dbReference type="SMART" id="SM00479">
    <property type="entry name" value="EXOIII"/>
    <property type="match status" value="1"/>
</dbReference>
<dbReference type="SUPFAM" id="SSF53098">
    <property type="entry name" value="Ribonuclease H-like"/>
    <property type="match status" value="1"/>
</dbReference>
<accession>Q1BXZ5</accession>
<evidence type="ECO:0000255" key="1">
    <source>
        <dbReference type="HAMAP-Rule" id="MF_00045"/>
    </source>
</evidence>
<keyword id="KW-0963">Cytoplasm</keyword>
<keyword id="KW-0269">Exonuclease</keyword>
<keyword id="KW-0378">Hydrolase</keyword>
<keyword id="KW-0540">Nuclease</keyword>
<organism>
    <name type="scientific">Burkholderia orbicola (strain AU 1054)</name>
    <dbReference type="NCBI Taxonomy" id="331271"/>
    <lineage>
        <taxon>Bacteria</taxon>
        <taxon>Pseudomonadati</taxon>
        <taxon>Pseudomonadota</taxon>
        <taxon>Betaproteobacteria</taxon>
        <taxon>Burkholderiales</taxon>
        <taxon>Burkholderiaceae</taxon>
        <taxon>Burkholderia</taxon>
        <taxon>Burkholderia cepacia complex</taxon>
        <taxon>Burkholderia orbicola</taxon>
    </lineage>
</organism>
<comment type="function">
    <text evidence="1">3'-to-5' exoribonuclease specific for small oligoribonucleotides.</text>
</comment>
<comment type="subcellular location">
    <subcellularLocation>
        <location evidence="1">Cytoplasm</location>
    </subcellularLocation>
</comment>
<comment type="similarity">
    <text evidence="1">Belongs to the oligoribonuclease family.</text>
</comment>
<reference key="1">
    <citation type="submission" date="2006-05" db="EMBL/GenBank/DDBJ databases">
        <title>Complete sequence of chromosome 1 of Burkholderia cenocepacia AU 1054.</title>
        <authorList>
            <consortium name="US DOE Joint Genome Institute"/>
            <person name="Copeland A."/>
            <person name="Lucas S."/>
            <person name="Lapidus A."/>
            <person name="Barry K."/>
            <person name="Detter J.C."/>
            <person name="Glavina del Rio T."/>
            <person name="Hammon N."/>
            <person name="Israni S."/>
            <person name="Dalin E."/>
            <person name="Tice H."/>
            <person name="Pitluck S."/>
            <person name="Chain P."/>
            <person name="Malfatti S."/>
            <person name="Shin M."/>
            <person name="Vergez L."/>
            <person name="Schmutz J."/>
            <person name="Larimer F."/>
            <person name="Land M."/>
            <person name="Hauser L."/>
            <person name="Kyrpides N."/>
            <person name="Lykidis A."/>
            <person name="LiPuma J.J."/>
            <person name="Konstantinidis K."/>
            <person name="Tiedje J.M."/>
            <person name="Richardson P."/>
        </authorList>
    </citation>
    <scope>NUCLEOTIDE SEQUENCE [LARGE SCALE GENOMIC DNA]</scope>
    <source>
        <strain>AU 1054</strain>
    </source>
</reference>
<feature type="chain" id="PRO_1000004232" description="Oligoribonuclease">
    <location>
        <begin position="1"/>
        <end position="206"/>
    </location>
</feature>
<feature type="domain" description="Exonuclease" evidence="1">
    <location>
        <begin position="20"/>
        <end position="183"/>
    </location>
</feature>
<feature type="active site" evidence="1">
    <location>
        <position position="141"/>
    </location>
</feature>
<protein>
    <recommendedName>
        <fullName evidence="1">Oligoribonuclease</fullName>
        <ecNumber evidence="1">3.1.15.-</ecNumber>
    </recommendedName>
</protein>
<sequence>MTDTAASASQPALVRNELNLVWLDMEMTGLDPDNDRIIEIAVVVTNSTLDIAVEGPVFAIHQSDETLAKMDDWNKSTHGRSGLIDRVRASTVTEAEAAAQLQAFLAQYVSPGKSPMCGNSICQDRRFMARWMPEFERFFHYRNLDVSTLKELCRRWQPAIYKGFQKRAMHTALADIHESIDELKYYREHFLIPAASVSAGESAPAA</sequence>
<gene>
    <name evidence="1" type="primary">orn</name>
    <name type="ordered locus">Bcen_0599</name>
</gene>
<proteinExistence type="inferred from homology"/>